<reference key="1">
    <citation type="journal article" date="2004" name="J. Bacteriol.">
        <title>Comparative genomics of two Leptospira interrogans serovars reveals novel insights into physiology and pathogenesis.</title>
        <authorList>
            <person name="Nascimento A.L.T.O."/>
            <person name="Ko A.I."/>
            <person name="Martins E.A.L."/>
            <person name="Monteiro-Vitorello C.B."/>
            <person name="Ho P.L."/>
            <person name="Haake D.A."/>
            <person name="Verjovski-Almeida S."/>
            <person name="Hartskeerl R.A."/>
            <person name="Marques M.V."/>
            <person name="Oliveira M.C."/>
            <person name="Menck C.F.M."/>
            <person name="Leite L.C.C."/>
            <person name="Carrer H."/>
            <person name="Coutinho L.L."/>
            <person name="Degrave W.M."/>
            <person name="Dellagostin O.A."/>
            <person name="El-Dorry H."/>
            <person name="Ferro E.S."/>
            <person name="Ferro M.I.T."/>
            <person name="Furlan L.R."/>
            <person name="Gamberini M."/>
            <person name="Giglioti E.A."/>
            <person name="Goes-Neto A."/>
            <person name="Goldman G.H."/>
            <person name="Goldman M.H.S."/>
            <person name="Harakava R."/>
            <person name="Jeronimo S.M.B."/>
            <person name="Junqueira-de-Azevedo I.L.M."/>
            <person name="Kimura E.T."/>
            <person name="Kuramae E.E."/>
            <person name="Lemos E.G.M."/>
            <person name="Lemos M.V.F."/>
            <person name="Marino C.L."/>
            <person name="Nunes L.R."/>
            <person name="de Oliveira R.C."/>
            <person name="Pereira G.G."/>
            <person name="Reis M.S."/>
            <person name="Schriefer A."/>
            <person name="Siqueira W.J."/>
            <person name="Sommer P."/>
            <person name="Tsai S.M."/>
            <person name="Simpson A.J.G."/>
            <person name="Ferro J.A."/>
            <person name="Camargo L.E.A."/>
            <person name="Kitajima J.P."/>
            <person name="Setubal J.C."/>
            <person name="Van Sluys M.A."/>
        </authorList>
    </citation>
    <scope>NUCLEOTIDE SEQUENCE [LARGE SCALE GENOMIC DNA]</scope>
    <source>
        <strain>Fiocruz L1-130</strain>
    </source>
</reference>
<sequence>MTSSHNNLLQNFQEYLSVEKGLSDNSIYSYGYDLNKFKNFLEKEHIDFLKVQADDIMRFLNEEKDRKISSKTIAREVVAIRQFYKFLKDEKKLDTNPTEKIETPEVMRSIPDYLTQDEIEELFASIKEDNLYELRDKCIFELLYSSGLRISEACNLRLNDMDLEGMTLTVEGKGGRQRLVPFGEKSLDILNRYLKQSRPFILKSRNCEYLFVSKKGSYINRKSVWRLLNHYIKRTSILKKVTPHTLRHSFATHLLENHADLKSVQELLGHIDIATTQIYTHMANKTLREVHKKFHPRG</sequence>
<keyword id="KW-0131">Cell cycle</keyword>
<keyword id="KW-0132">Cell division</keyword>
<keyword id="KW-0159">Chromosome partition</keyword>
<keyword id="KW-0963">Cytoplasm</keyword>
<keyword id="KW-0229">DNA integration</keyword>
<keyword id="KW-0233">DNA recombination</keyword>
<keyword id="KW-0238">DNA-binding</keyword>
<gene>
    <name evidence="1" type="primary">xerD</name>
    <name type="ordered locus">LIC_11479</name>
</gene>
<feature type="chain" id="PRO_0000095392" description="Tyrosine recombinase XerD">
    <location>
        <begin position="1"/>
        <end position="298"/>
    </location>
</feature>
<feature type="domain" description="Core-binding (CB)" evidence="3">
    <location>
        <begin position="3"/>
        <end position="88"/>
    </location>
</feature>
<feature type="domain" description="Tyr recombinase" evidence="2">
    <location>
        <begin position="109"/>
        <end position="292"/>
    </location>
</feature>
<feature type="active site" evidence="1">
    <location>
        <position position="149"/>
    </location>
</feature>
<feature type="active site" evidence="1">
    <location>
        <position position="173"/>
    </location>
</feature>
<feature type="active site" evidence="1">
    <location>
        <position position="244"/>
    </location>
</feature>
<feature type="active site" evidence="1">
    <location>
        <position position="247"/>
    </location>
</feature>
<feature type="active site" evidence="1">
    <location>
        <position position="270"/>
    </location>
</feature>
<feature type="active site" description="O-(3'-phospho-DNA)-tyrosine intermediate" evidence="1">
    <location>
        <position position="279"/>
    </location>
</feature>
<proteinExistence type="inferred from homology"/>
<protein>
    <recommendedName>
        <fullName evidence="1">Tyrosine recombinase XerD</fullName>
    </recommendedName>
</protein>
<name>XERD_LEPIC</name>
<comment type="function">
    <text evidence="1">Site-specific tyrosine recombinase, which acts by catalyzing the cutting and rejoining of the recombining DNA molecules. The XerC-XerD complex is essential to convert dimers of the bacterial chromosome into monomers to permit their segregation at cell division. It also contributes to the segregational stability of plasmids.</text>
</comment>
<comment type="subunit">
    <text evidence="1">Forms a cyclic heterotetrameric complex composed of two molecules of XerC and two molecules of XerD.</text>
</comment>
<comment type="subcellular location">
    <subcellularLocation>
        <location evidence="1">Cytoplasm</location>
    </subcellularLocation>
</comment>
<comment type="similarity">
    <text evidence="1">Belongs to the 'phage' integrase family. XerD subfamily.</text>
</comment>
<dbReference type="EMBL" id="AE016823">
    <property type="protein sequence ID" value="AAS70077.1"/>
    <property type="molecule type" value="Genomic_DNA"/>
</dbReference>
<dbReference type="RefSeq" id="WP_000204200.1">
    <property type="nucleotide sequence ID" value="NC_005823.1"/>
</dbReference>
<dbReference type="SMR" id="Q72SA5"/>
<dbReference type="GeneID" id="61144777"/>
<dbReference type="KEGG" id="lic:LIC_11479"/>
<dbReference type="HOGENOM" id="CLU_027562_9_6_12"/>
<dbReference type="Proteomes" id="UP000007037">
    <property type="component" value="Chromosome I"/>
</dbReference>
<dbReference type="GO" id="GO:0005737">
    <property type="term" value="C:cytoplasm"/>
    <property type="evidence" value="ECO:0007669"/>
    <property type="project" value="UniProtKB-SubCell"/>
</dbReference>
<dbReference type="GO" id="GO:0003677">
    <property type="term" value="F:DNA binding"/>
    <property type="evidence" value="ECO:0007669"/>
    <property type="project" value="UniProtKB-KW"/>
</dbReference>
<dbReference type="GO" id="GO:0009037">
    <property type="term" value="F:tyrosine-based site-specific recombinase activity"/>
    <property type="evidence" value="ECO:0007669"/>
    <property type="project" value="UniProtKB-UniRule"/>
</dbReference>
<dbReference type="GO" id="GO:0051301">
    <property type="term" value="P:cell division"/>
    <property type="evidence" value="ECO:0007669"/>
    <property type="project" value="UniProtKB-KW"/>
</dbReference>
<dbReference type="GO" id="GO:0007059">
    <property type="term" value="P:chromosome segregation"/>
    <property type="evidence" value="ECO:0007669"/>
    <property type="project" value="UniProtKB-UniRule"/>
</dbReference>
<dbReference type="GO" id="GO:0006313">
    <property type="term" value="P:DNA transposition"/>
    <property type="evidence" value="ECO:0007669"/>
    <property type="project" value="UniProtKB-UniRule"/>
</dbReference>
<dbReference type="CDD" id="cd00798">
    <property type="entry name" value="INT_XerDC_C"/>
    <property type="match status" value="1"/>
</dbReference>
<dbReference type="Gene3D" id="1.10.150.130">
    <property type="match status" value="1"/>
</dbReference>
<dbReference type="Gene3D" id="1.10.443.10">
    <property type="entry name" value="Intergrase catalytic core"/>
    <property type="match status" value="1"/>
</dbReference>
<dbReference type="HAMAP" id="MF_01808">
    <property type="entry name" value="Recomb_XerC_XerD"/>
    <property type="match status" value="1"/>
</dbReference>
<dbReference type="HAMAP" id="MF_01807">
    <property type="entry name" value="Recomb_XerD"/>
    <property type="match status" value="1"/>
</dbReference>
<dbReference type="InterPro" id="IPR044068">
    <property type="entry name" value="CB"/>
</dbReference>
<dbReference type="InterPro" id="IPR011010">
    <property type="entry name" value="DNA_brk_join_enz"/>
</dbReference>
<dbReference type="InterPro" id="IPR013762">
    <property type="entry name" value="Integrase-like_cat_sf"/>
</dbReference>
<dbReference type="InterPro" id="IPR002104">
    <property type="entry name" value="Integrase_catalytic"/>
</dbReference>
<dbReference type="InterPro" id="IPR010998">
    <property type="entry name" value="Integrase_recombinase_N"/>
</dbReference>
<dbReference type="InterPro" id="IPR004107">
    <property type="entry name" value="Integrase_SAM-like_N"/>
</dbReference>
<dbReference type="InterPro" id="IPR011932">
    <property type="entry name" value="Recomb_XerD"/>
</dbReference>
<dbReference type="InterPro" id="IPR023009">
    <property type="entry name" value="Tyrosine_recombinase_XerC/XerD"/>
</dbReference>
<dbReference type="InterPro" id="IPR050090">
    <property type="entry name" value="Tyrosine_recombinase_XerCD"/>
</dbReference>
<dbReference type="NCBIfam" id="NF001399">
    <property type="entry name" value="PRK00283.1"/>
    <property type="match status" value="1"/>
</dbReference>
<dbReference type="NCBIfam" id="NF040815">
    <property type="entry name" value="recomb_XerA_Arch"/>
    <property type="match status" value="1"/>
</dbReference>
<dbReference type="NCBIfam" id="TIGR02225">
    <property type="entry name" value="recomb_XerD"/>
    <property type="match status" value="1"/>
</dbReference>
<dbReference type="PANTHER" id="PTHR30349">
    <property type="entry name" value="PHAGE INTEGRASE-RELATED"/>
    <property type="match status" value="1"/>
</dbReference>
<dbReference type="PANTHER" id="PTHR30349:SF81">
    <property type="entry name" value="TYROSINE RECOMBINASE XERC"/>
    <property type="match status" value="1"/>
</dbReference>
<dbReference type="Pfam" id="PF02899">
    <property type="entry name" value="Phage_int_SAM_1"/>
    <property type="match status" value="1"/>
</dbReference>
<dbReference type="Pfam" id="PF00589">
    <property type="entry name" value="Phage_integrase"/>
    <property type="match status" value="1"/>
</dbReference>
<dbReference type="SUPFAM" id="SSF56349">
    <property type="entry name" value="DNA breaking-rejoining enzymes"/>
    <property type="match status" value="1"/>
</dbReference>
<dbReference type="PROSITE" id="PS51900">
    <property type="entry name" value="CB"/>
    <property type="match status" value="1"/>
</dbReference>
<dbReference type="PROSITE" id="PS51898">
    <property type="entry name" value="TYR_RECOMBINASE"/>
    <property type="match status" value="1"/>
</dbReference>
<evidence type="ECO:0000255" key="1">
    <source>
        <dbReference type="HAMAP-Rule" id="MF_01807"/>
    </source>
</evidence>
<evidence type="ECO:0000255" key="2">
    <source>
        <dbReference type="PROSITE-ProRule" id="PRU01246"/>
    </source>
</evidence>
<evidence type="ECO:0000255" key="3">
    <source>
        <dbReference type="PROSITE-ProRule" id="PRU01248"/>
    </source>
</evidence>
<organism>
    <name type="scientific">Leptospira interrogans serogroup Icterohaemorrhagiae serovar copenhageni (strain Fiocruz L1-130)</name>
    <dbReference type="NCBI Taxonomy" id="267671"/>
    <lineage>
        <taxon>Bacteria</taxon>
        <taxon>Pseudomonadati</taxon>
        <taxon>Spirochaetota</taxon>
        <taxon>Spirochaetia</taxon>
        <taxon>Leptospirales</taxon>
        <taxon>Leptospiraceae</taxon>
        <taxon>Leptospira</taxon>
    </lineage>
</organism>
<accession>Q72SA5</accession>